<gene>
    <name type="primary">fdx</name>
    <name type="ordered locus">BU606</name>
</gene>
<name>FER_BUCAI</name>
<dbReference type="EMBL" id="BA000003">
    <property type="protein sequence ID" value="BAB13290.1"/>
    <property type="molecule type" value="Genomic_DNA"/>
</dbReference>
<dbReference type="RefSeq" id="NP_240404.1">
    <property type="nucleotide sequence ID" value="NC_002528.1"/>
</dbReference>
<dbReference type="RefSeq" id="WP_009874553.1">
    <property type="nucleotide sequence ID" value="NZ_AP036055.1"/>
</dbReference>
<dbReference type="SMR" id="P57661"/>
<dbReference type="STRING" id="563178.BUAP5A_598"/>
<dbReference type="EnsemblBacteria" id="BAB13290">
    <property type="protein sequence ID" value="BAB13290"/>
    <property type="gene ID" value="BAB13290"/>
</dbReference>
<dbReference type="KEGG" id="buc:BU606"/>
<dbReference type="PATRIC" id="fig|107806.10.peg.608"/>
<dbReference type="eggNOG" id="COG0633">
    <property type="taxonomic scope" value="Bacteria"/>
</dbReference>
<dbReference type="HOGENOM" id="CLU_082632_5_2_6"/>
<dbReference type="Proteomes" id="UP000001806">
    <property type="component" value="Chromosome"/>
</dbReference>
<dbReference type="GO" id="GO:0005829">
    <property type="term" value="C:cytosol"/>
    <property type="evidence" value="ECO:0007669"/>
    <property type="project" value="TreeGrafter"/>
</dbReference>
<dbReference type="GO" id="GO:0051537">
    <property type="term" value="F:2 iron, 2 sulfur cluster binding"/>
    <property type="evidence" value="ECO:0007669"/>
    <property type="project" value="UniProtKB-KW"/>
</dbReference>
<dbReference type="GO" id="GO:0009055">
    <property type="term" value="F:electron transfer activity"/>
    <property type="evidence" value="ECO:0007669"/>
    <property type="project" value="InterPro"/>
</dbReference>
<dbReference type="GO" id="GO:0046872">
    <property type="term" value="F:metal ion binding"/>
    <property type="evidence" value="ECO:0007669"/>
    <property type="project" value="UniProtKB-KW"/>
</dbReference>
<dbReference type="GO" id="GO:0140647">
    <property type="term" value="P:P450-containing electron transport chain"/>
    <property type="evidence" value="ECO:0007669"/>
    <property type="project" value="InterPro"/>
</dbReference>
<dbReference type="CDD" id="cd00207">
    <property type="entry name" value="fer2"/>
    <property type="match status" value="1"/>
</dbReference>
<dbReference type="Gene3D" id="3.10.20.30">
    <property type="match status" value="1"/>
</dbReference>
<dbReference type="InterPro" id="IPR036010">
    <property type="entry name" value="2Fe-2S_ferredoxin-like_sf"/>
</dbReference>
<dbReference type="InterPro" id="IPR001041">
    <property type="entry name" value="2Fe-2S_ferredoxin-type"/>
</dbReference>
<dbReference type="InterPro" id="IPR001055">
    <property type="entry name" value="Adrenodoxin-like"/>
</dbReference>
<dbReference type="InterPro" id="IPR018298">
    <property type="entry name" value="Adrenodoxin_Fe-S_BS"/>
</dbReference>
<dbReference type="InterPro" id="IPR012675">
    <property type="entry name" value="Beta-grasp_dom_sf"/>
</dbReference>
<dbReference type="InterPro" id="IPR011536">
    <property type="entry name" value="Fdx_isc"/>
</dbReference>
<dbReference type="NCBIfam" id="TIGR02007">
    <property type="entry name" value="fdx_isc"/>
    <property type="match status" value="1"/>
</dbReference>
<dbReference type="PANTHER" id="PTHR23426:SF65">
    <property type="entry name" value="FERREDOXIN-2, MITOCHONDRIAL"/>
    <property type="match status" value="1"/>
</dbReference>
<dbReference type="PANTHER" id="PTHR23426">
    <property type="entry name" value="FERREDOXIN/ADRENODOXIN"/>
    <property type="match status" value="1"/>
</dbReference>
<dbReference type="Pfam" id="PF00111">
    <property type="entry name" value="Fer2"/>
    <property type="match status" value="1"/>
</dbReference>
<dbReference type="PRINTS" id="PR00355">
    <property type="entry name" value="ADRENODOXIN"/>
</dbReference>
<dbReference type="SUPFAM" id="SSF54292">
    <property type="entry name" value="2Fe-2S ferredoxin-like"/>
    <property type="match status" value="1"/>
</dbReference>
<dbReference type="PROSITE" id="PS51085">
    <property type="entry name" value="2FE2S_FER_2"/>
    <property type="match status" value="1"/>
</dbReference>
<dbReference type="PROSITE" id="PS00814">
    <property type="entry name" value="ADX"/>
    <property type="match status" value="1"/>
</dbReference>
<evidence type="ECO:0000250" key="1"/>
<evidence type="ECO:0000255" key="2">
    <source>
        <dbReference type="PROSITE-ProRule" id="PRU00465"/>
    </source>
</evidence>
<evidence type="ECO:0000305" key="3"/>
<accession>P57661</accession>
<feature type="chain" id="PRO_0000201165" description="2Fe-2S ferredoxin">
    <location>
        <begin position="1"/>
        <end position="111"/>
    </location>
</feature>
<feature type="domain" description="2Fe-2S ferredoxin-type" evidence="2">
    <location>
        <begin position="1"/>
        <end position="104"/>
    </location>
</feature>
<feature type="binding site" evidence="2">
    <location>
        <position position="42"/>
    </location>
    <ligand>
        <name>[2Fe-2S] cluster</name>
        <dbReference type="ChEBI" id="CHEBI:190135"/>
    </ligand>
</feature>
<feature type="binding site" evidence="2">
    <location>
        <position position="48"/>
    </location>
    <ligand>
        <name>[2Fe-2S] cluster</name>
        <dbReference type="ChEBI" id="CHEBI:190135"/>
    </ligand>
</feature>
<feature type="binding site" evidence="2">
    <location>
        <position position="51"/>
    </location>
    <ligand>
        <name>[2Fe-2S] cluster</name>
        <dbReference type="ChEBI" id="CHEBI:190135"/>
    </ligand>
</feature>
<feature type="binding site" evidence="2">
    <location>
        <position position="87"/>
    </location>
    <ligand>
        <name>[2Fe-2S] cluster</name>
        <dbReference type="ChEBI" id="CHEBI:190135"/>
    </ligand>
</feature>
<keyword id="KW-0001">2Fe-2S</keyword>
<keyword id="KW-0249">Electron transport</keyword>
<keyword id="KW-0408">Iron</keyword>
<keyword id="KW-0411">Iron-sulfur</keyword>
<keyword id="KW-0479">Metal-binding</keyword>
<keyword id="KW-1185">Reference proteome</keyword>
<keyword id="KW-0813">Transport</keyword>
<sequence length="111" mass="12476">MPKVLFLPHKILLPKSIECEAQTGETILTVALRNNIKLEHACEQSCACSTCHCIIKKGFFSLSGWSEKEDDILDKAWGLQSESRLSCQAVIGKSDIEVEIPLYNLNYTVEY</sequence>
<comment type="function">
    <text>Ferredoxin are iron-sulfur proteins that transfer electrons in a wide variety of metabolic reactions.</text>
</comment>
<comment type="cofactor">
    <cofactor evidence="1">
        <name>[2Fe-2S] cluster</name>
        <dbReference type="ChEBI" id="CHEBI:190135"/>
    </cofactor>
    <text evidence="1">Binds 1 [2Fe-2S] cluster.</text>
</comment>
<comment type="similarity">
    <text evidence="3">Belongs to the adrenodoxin/putidaredoxin family.</text>
</comment>
<reference key="1">
    <citation type="journal article" date="2000" name="Nature">
        <title>Genome sequence of the endocellular bacterial symbiont of aphids Buchnera sp. APS.</title>
        <authorList>
            <person name="Shigenobu S."/>
            <person name="Watanabe H."/>
            <person name="Hattori M."/>
            <person name="Sakaki Y."/>
            <person name="Ishikawa H."/>
        </authorList>
    </citation>
    <scope>NUCLEOTIDE SEQUENCE [LARGE SCALE GENOMIC DNA]</scope>
    <source>
        <strain>APS</strain>
    </source>
</reference>
<protein>
    <recommendedName>
        <fullName>2Fe-2S ferredoxin</fullName>
    </recommendedName>
</protein>
<organism>
    <name type="scientific">Buchnera aphidicola subsp. Acyrthosiphon pisum (strain APS)</name>
    <name type="common">Acyrthosiphon pisum symbiotic bacterium</name>
    <dbReference type="NCBI Taxonomy" id="107806"/>
    <lineage>
        <taxon>Bacteria</taxon>
        <taxon>Pseudomonadati</taxon>
        <taxon>Pseudomonadota</taxon>
        <taxon>Gammaproteobacteria</taxon>
        <taxon>Enterobacterales</taxon>
        <taxon>Erwiniaceae</taxon>
        <taxon>Buchnera</taxon>
    </lineage>
</organism>
<proteinExistence type="inferred from homology"/>